<sequence length="494" mass="57114">MLTWTLWCGLLFLLWIYFLWSRRRFYLLTLKIPGPLGYPILGMAHWLMRREDILNAFGCFLDKHGPTIFSWLGPIPFMIVSDPQVVQDIFTSPHCVNKGIIYKAVDDGAGVGLFSLKDPRWSIHRKLLNPAFGHKVLLSFLPIFNRETALLLDQLEPLQDDGEKDLIPLLQSFTLGIATQTTMGSDVKDEESFRSNSLLGRYQCILETMTDMCFSPWLNSRFCRQLAGKESHYYQAKTEIRQFIRKIIERKLAEDEMGALPSIQSNDKNLFLNLVTDLMRRGVFTLKNVEDESNIIVFGAFETTANAVYYTLMLLAMFPEYQERAFEEIKTIFPNTGDFDVSYADTQQMVYLDLILNESMRVIPPVPVVSRQTSQDLKLSNGIVVPKGVQIAIDIYHMHRSKKIWGPDAETFNPDHFLPHNIQDKHPYAYIPFTKGIRNCIGWRYALISAKVTLAKLLRNYRFKTSFPFENLYFVEDITMKLKSVPLLELQKRT</sequence>
<gene>
    <name type="primary">Cyp313a4</name>
    <name type="ORF">CG6802</name>
</gene>
<reference key="1">
    <citation type="journal article" date="2000" name="Science">
        <title>The genome sequence of Drosophila melanogaster.</title>
        <authorList>
            <person name="Adams M.D."/>
            <person name="Celniker S.E."/>
            <person name="Holt R.A."/>
            <person name="Evans C.A."/>
            <person name="Gocayne J.D."/>
            <person name="Amanatides P.G."/>
            <person name="Scherer S.E."/>
            <person name="Li P.W."/>
            <person name="Hoskins R.A."/>
            <person name="Galle R.F."/>
            <person name="George R.A."/>
            <person name="Lewis S.E."/>
            <person name="Richards S."/>
            <person name="Ashburner M."/>
            <person name="Henderson S.N."/>
            <person name="Sutton G.G."/>
            <person name="Wortman J.R."/>
            <person name="Yandell M.D."/>
            <person name="Zhang Q."/>
            <person name="Chen L.X."/>
            <person name="Brandon R.C."/>
            <person name="Rogers Y.-H.C."/>
            <person name="Blazej R.G."/>
            <person name="Champe M."/>
            <person name="Pfeiffer B.D."/>
            <person name="Wan K.H."/>
            <person name="Doyle C."/>
            <person name="Baxter E.G."/>
            <person name="Helt G."/>
            <person name="Nelson C.R."/>
            <person name="Miklos G.L.G."/>
            <person name="Abril J.F."/>
            <person name="Agbayani A."/>
            <person name="An H.-J."/>
            <person name="Andrews-Pfannkoch C."/>
            <person name="Baldwin D."/>
            <person name="Ballew R.M."/>
            <person name="Basu A."/>
            <person name="Baxendale J."/>
            <person name="Bayraktaroglu L."/>
            <person name="Beasley E.M."/>
            <person name="Beeson K.Y."/>
            <person name="Benos P.V."/>
            <person name="Berman B.P."/>
            <person name="Bhandari D."/>
            <person name="Bolshakov S."/>
            <person name="Borkova D."/>
            <person name="Botchan M.R."/>
            <person name="Bouck J."/>
            <person name="Brokstein P."/>
            <person name="Brottier P."/>
            <person name="Burtis K.C."/>
            <person name="Busam D.A."/>
            <person name="Butler H."/>
            <person name="Cadieu E."/>
            <person name="Center A."/>
            <person name="Chandra I."/>
            <person name="Cherry J.M."/>
            <person name="Cawley S."/>
            <person name="Dahlke C."/>
            <person name="Davenport L.B."/>
            <person name="Davies P."/>
            <person name="de Pablos B."/>
            <person name="Delcher A."/>
            <person name="Deng Z."/>
            <person name="Mays A.D."/>
            <person name="Dew I."/>
            <person name="Dietz S.M."/>
            <person name="Dodson K."/>
            <person name="Doup L.E."/>
            <person name="Downes M."/>
            <person name="Dugan-Rocha S."/>
            <person name="Dunkov B.C."/>
            <person name="Dunn P."/>
            <person name="Durbin K.J."/>
            <person name="Evangelista C.C."/>
            <person name="Ferraz C."/>
            <person name="Ferriera S."/>
            <person name="Fleischmann W."/>
            <person name="Fosler C."/>
            <person name="Gabrielian A.E."/>
            <person name="Garg N.S."/>
            <person name="Gelbart W.M."/>
            <person name="Glasser K."/>
            <person name="Glodek A."/>
            <person name="Gong F."/>
            <person name="Gorrell J.H."/>
            <person name="Gu Z."/>
            <person name="Guan P."/>
            <person name="Harris M."/>
            <person name="Harris N.L."/>
            <person name="Harvey D.A."/>
            <person name="Heiman T.J."/>
            <person name="Hernandez J.R."/>
            <person name="Houck J."/>
            <person name="Hostin D."/>
            <person name="Houston K.A."/>
            <person name="Howland T.J."/>
            <person name="Wei M.-H."/>
            <person name="Ibegwam C."/>
            <person name="Jalali M."/>
            <person name="Kalush F."/>
            <person name="Karpen G.H."/>
            <person name="Ke Z."/>
            <person name="Kennison J.A."/>
            <person name="Ketchum K.A."/>
            <person name="Kimmel B.E."/>
            <person name="Kodira C.D."/>
            <person name="Kraft C.L."/>
            <person name="Kravitz S."/>
            <person name="Kulp D."/>
            <person name="Lai Z."/>
            <person name="Lasko P."/>
            <person name="Lei Y."/>
            <person name="Levitsky A.A."/>
            <person name="Li J.H."/>
            <person name="Li Z."/>
            <person name="Liang Y."/>
            <person name="Lin X."/>
            <person name="Liu X."/>
            <person name="Mattei B."/>
            <person name="McIntosh T.C."/>
            <person name="McLeod M.P."/>
            <person name="McPherson D."/>
            <person name="Merkulov G."/>
            <person name="Milshina N.V."/>
            <person name="Mobarry C."/>
            <person name="Morris J."/>
            <person name="Moshrefi A."/>
            <person name="Mount S.M."/>
            <person name="Moy M."/>
            <person name="Murphy B."/>
            <person name="Murphy L."/>
            <person name="Muzny D.M."/>
            <person name="Nelson D.L."/>
            <person name="Nelson D.R."/>
            <person name="Nelson K.A."/>
            <person name="Nixon K."/>
            <person name="Nusskern D.R."/>
            <person name="Pacleb J.M."/>
            <person name="Palazzolo M."/>
            <person name="Pittman G.S."/>
            <person name="Pan S."/>
            <person name="Pollard J."/>
            <person name="Puri V."/>
            <person name="Reese M.G."/>
            <person name="Reinert K."/>
            <person name="Remington K."/>
            <person name="Saunders R.D.C."/>
            <person name="Scheeler F."/>
            <person name="Shen H."/>
            <person name="Shue B.C."/>
            <person name="Siden-Kiamos I."/>
            <person name="Simpson M."/>
            <person name="Skupski M.P."/>
            <person name="Smith T.J."/>
            <person name="Spier E."/>
            <person name="Spradling A.C."/>
            <person name="Stapleton M."/>
            <person name="Strong R."/>
            <person name="Sun E."/>
            <person name="Svirskas R."/>
            <person name="Tector C."/>
            <person name="Turner R."/>
            <person name="Venter E."/>
            <person name="Wang A.H."/>
            <person name="Wang X."/>
            <person name="Wang Z.-Y."/>
            <person name="Wassarman D.A."/>
            <person name="Weinstock G.M."/>
            <person name="Weissenbach J."/>
            <person name="Williams S.M."/>
            <person name="Woodage T."/>
            <person name="Worley K.C."/>
            <person name="Wu D."/>
            <person name="Yang S."/>
            <person name="Yao Q.A."/>
            <person name="Ye J."/>
            <person name="Yeh R.-F."/>
            <person name="Zaveri J.S."/>
            <person name="Zhan M."/>
            <person name="Zhang G."/>
            <person name="Zhao Q."/>
            <person name="Zheng L."/>
            <person name="Zheng X.H."/>
            <person name="Zhong F.N."/>
            <person name="Zhong W."/>
            <person name="Zhou X."/>
            <person name="Zhu S.C."/>
            <person name="Zhu X."/>
            <person name="Smith H.O."/>
            <person name="Gibbs R.A."/>
            <person name="Myers E.W."/>
            <person name="Rubin G.M."/>
            <person name="Venter J.C."/>
        </authorList>
    </citation>
    <scope>NUCLEOTIDE SEQUENCE [LARGE SCALE GENOMIC DNA]</scope>
    <source>
        <strain>Berkeley</strain>
    </source>
</reference>
<reference key="2">
    <citation type="journal article" date="2002" name="Genome Biol.">
        <title>Annotation of the Drosophila melanogaster euchromatic genome: a systematic review.</title>
        <authorList>
            <person name="Misra S."/>
            <person name="Crosby M.A."/>
            <person name="Mungall C.J."/>
            <person name="Matthews B.B."/>
            <person name="Campbell K.S."/>
            <person name="Hradecky P."/>
            <person name="Huang Y."/>
            <person name="Kaminker J.S."/>
            <person name="Millburn G.H."/>
            <person name="Prochnik S.E."/>
            <person name="Smith C.D."/>
            <person name="Tupy J.L."/>
            <person name="Whitfield E.J."/>
            <person name="Bayraktaroglu L."/>
            <person name="Berman B.P."/>
            <person name="Bettencourt B.R."/>
            <person name="Celniker S.E."/>
            <person name="de Grey A.D.N.J."/>
            <person name="Drysdale R.A."/>
            <person name="Harris N.L."/>
            <person name="Richter J."/>
            <person name="Russo S."/>
            <person name="Schroeder A.J."/>
            <person name="Shu S.Q."/>
            <person name="Stapleton M."/>
            <person name="Yamada C."/>
            <person name="Ashburner M."/>
            <person name="Gelbart W.M."/>
            <person name="Rubin G.M."/>
            <person name="Lewis S.E."/>
        </authorList>
    </citation>
    <scope>GENOME REANNOTATION</scope>
    <source>
        <strain>Berkeley</strain>
    </source>
</reference>
<reference key="3">
    <citation type="submission" date="2006-01" db="EMBL/GenBank/DDBJ databases">
        <authorList>
            <person name="Stapleton M."/>
            <person name="Carlson J.W."/>
            <person name="Chavez C."/>
            <person name="Frise E."/>
            <person name="George R.A."/>
            <person name="Pacleb J.M."/>
            <person name="Park S."/>
            <person name="Wan K.H."/>
            <person name="Yu C."/>
            <person name="Celniker S.E."/>
        </authorList>
    </citation>
    <scope>NUCLEOTIDE SEQUENCE [LARGE SCALE MRNA]</scope>
    <source>
        <strain>Berkeley</strain>
    </source>
</reference>
<evidence type="ECO:0000250" key="1"/>
<evidence type="ECO:0000305" key="2"/>
<accession>Q9VG40</accession>
<accession>Q29QH3</accession>
<dbReference type="EC" id="1.14.-.-"/>
<dbReference type="EMBL" id="AE014297">
    <property type="protein sequence ID" value="AAF54850.4"/>
    <property type="molecule type" value="Genomic_DNA"/>
</dbReference>
<dbReference type="EMBL" id="BT024417">
    <property type="protein sequence ID" value="ABC86479.1"/>
    <property type="status" value="ALT_FRAME"/>
    <property type="molecule type" value="mRNA"/>
</dbReference>
<dbReference type="RefSeq" id="NP_650224.3">
    <property type="nucleotide sequence ID" value="NM_141967.4"/>
</dbReference>
<dbReference type="SMR" id="Q9VG40"/>
<dbReference type="FunCoup" id="Q9VG40">
    <property type="interactions" value="59"/>
</dbReference>
<dbReference type="IntAct" id="Q9VG40">
    <property type="interactions" value="1"/>
</dbReference>
<dbReference type="STRING" id="7227.FBpp0082136"/>
<dbReference type="PaxDb" id="7227-FBpp0082136"/>
<dbReference type="EnsemblMetazoa" id="FBtr0082667">
    <property type="protein sequence ID" value="FBpp0082136"/>
    <property type="gene ID" value="FBgn0038076"/>
</dbReference>
<dbReference type="GeneID" id="41563"/>
<dbReference type="KEGG" id="dme:Dmel_CG6802"/>
<dbReference type="UCSC" id="CG6802-RA">
    <property type="organism name" value="d. melanogaster"/>
</dbReference>
<dbReference type="AGR" id="FB:FBgn0038076"/>
<dbReference type="CTD" id="41563"/>
<dbReference type="FlyBase" id="FBgn0038076">
    <property type="gene designation" value="Cyp313a4"/>
</dbReference>
<dbReference type="VEuPathDB" id="VectorBase:FBgn0038076"/>
<dbReference type="eggNOG" id="KOG0157">
    <property type="taxonomic scope" value="Eukaryota"/>
</dbReference>
<dbReference type="GeneTree" id="ENSGT00940000167150"/>
<dbReference type="HOGENOM" id="CLU_001570_5_1_1"/>
<dbReference type="InParanoid" id="Q9VG40"/>
<dbReference type="OMA" id="NSRFCRQ"/>
<dbReference type="OrthoDB" id="1470350at2759"/>
<dbReference type="PhylomeDB" id="Q9VG40"/>
<dbReference type="BioGRID-ORCS" id="41563">
    <property type="hits" value="0 hits in 1 CRISPR screen"/>
</dbReference>
<dbReference type="GenomeRNAi" id="41563"/>
<dbReference type="PRO" id="PR:Q9VG40"/>
<dbReference type="Proteomes" id="UP000000803">
    <property type="component" value="Chromosome 3R"/>
</dbReference>
<dbReference type="Bgee" id="FBgn0038076">
    <property type="expression patterns" value="Expressed in adult tracheocyte (Drosophila) in testis and 25 other cell types or tissues"/>
</dbReference>
<dbReference type="ExpressionAtlas" id="Q9VG40">
    <property type="expression patterns" value="baseline and differential"/>
</dbReference>
<dbReference type="GO" id="GO:0005789">
    <property type="term" value="C:endoplasmic reticulum membrane"/>
    <property type="evidence" value="ECO:0007669"/>
    <property type="project" value="UniProtKB-SubCell"/>
</dbReference>
<dbReference type="GO" id="GO:0020037">
    <property type="term" value="F:heme binding"/>
    <property type="evidence" value="ECO:0007669"/>
    <property type="project" value="InterPro"/>
</dbReference>
<dbReference type="GO" id="GO:0005506">
    <property type="term" value="F:iron ion binding"/>
    <property type="evidence" value="ECO:0007669"/>
    <property type="project" value="InterPro"/>
</dbReference>
<dbReference type="GO" id="GO:0004497">
    <property type="term" value="F:monooxygenase activity"/>
    <property type="evidence" value="ECO:0007669"/>
    <property type="project" value="UniProtKB-KW"/>
</dbReference>
<dbReference type="GO" id="GO:0016705">
    <property type="term" value="F:oxidoreductase activity, acting on paired donors, with incorporation or reduction of molecular oxygen"/>
    <property type="evidence" value="ECO:0007669"/>
    <property type="project" value="InterPro"/>
</dbReference>
<dbReference type="CDD" id="cd11057">
    <property type="entry name" value="CYP313-like"/>
    <property type="match status" value="1"/>
</dbReference>
<dbReference type="Gene3D" id="1.10.630.10">
    <property type="entry name" value="Cytochrome P450"/>
    <property type="match status" value="1"/>
</dbReference>
<dbReference type="InterPro" id="IPR001128">
    <property type="entry name" value="Cyt_P450"/>
</dbReference>
<dbReference type="InterPro" id="IPR002401">
    <property type="entry name" value="Cyt_P450_E_grp-I"/>
</dbReference>
<dbReference type="InterPro" id="IPR036396">
    <property type="entry name" value="Cyt_P450_sf"/>
</dbReference>
<dbReference type="InterPro" id="IPR050196">
    <property type="entry name" value="Cytochrome_P450_Monoox"/>
</dbReference>
<dbReference type="PANTHER" id="PTHR24291:SF189">
    <property type="entry name" value="CYTOCHROME P450 4C3-RELATED"/>
    <property type="match status" value="1"/>
</dbReference>
<dbReference type="PANTHER" id="PTHR24291">
    <property type="entry name" value="CYTOCHROME P450 FAMILY 4"/>
    <property type="match status" value="1"/>
</dbReference>
<dbReference type="Pfam" id="PF00067">
    <property type="entry name" value="p450"/>
    <property type="match status" value="1"/>
</dbReference>
<dbReference type="PRINTS" id="PR00463">
    <property type="entry name" value="EP450I"/>
</dbReference>
<dbReference type="PRINTS" id="PR00385">
    <property type="entry name" value="P450"/>
</dbReference>
<dbReference type="SUPFAM" id="SSF48264">
    <property type="entry name" value="Cytochrome P450"/>
    <property type="match status" value="1"/>
</dbReference>
<keyword id="KW-0256">Endoplasmic reticulum</keyword>
<keyword id="KW-0349">Heme</keyword>
<keyword id="KW-0408">Iron</keyword>
<keyword id="KW-0472">Membrane</keyword>
<keyword id="KW-0479">Metal-binding</keyword>
<keyword id="KW-0492">Microsome</keyword>
<keyword id="KW-0503">Monooxygenase</keyword>
<keyword id="KW-0560">Oxidoreductase</keyword>
<keyword id="KW-1185">Reference proteome</keyword>
<protein>
    <recommendedName>
        <fullName>Probable cytochrome P450 313a4</fullName>
        <ecNumber>1.14.-.-</ecNumber>
    </recommendedName>
    <alternativeName>
        <fullName>CYPCCCXIIIA4</fullName>
    </alternativeName>
</protein>
<comment type="function">
    <text evidence="1">May be involved in the metabolism of insect hormones and in the breakdown of synthetic insecticides.</text>
</comment>
<comment type="cofactor">
    <cofactor evidence="1">
        <name>heme</name>
        <dbReference type="ChEBI" id="CHEBI:30413"/>
    </cofactor>
</comment>
<comment type="subcellular location">
    <subcellularLocation>
        <location evidence="2">Endoplasmic reticulum membrane</location>
        <topology evidence="2">Peripheral membrane protein</topology>
    </subcellularLocation>
    <subcellularLocation>
        <location evidence="2">Microsome membrane</location>
        <topology evidence="2">Peripheral membrane protein</topology>
    </subcellularLocation>
</comment>
<comment type="similarity">
    <text evidence="2">Belongs to the cytochrome P450 family.</text>
</comment>
<comment type="sequence caution" evidence="2">
    <conflict type="frameshift">
        <sequence resource="EMBL-CDS" id="ABC86479"/>
    </conflict>
</comment>
<proteinExistence type="evidence at transcript level"/>
<name>CP134_DROME</name>
<organism>
    <name type="scientific">Drosophila melanogaster</name>
    <name type="common">Fruit fly</name>
    <dbReference type="NCBI Taxonomy" id="7227"/>
    <lineage>
        <taxon>Eukaryota</taxon>
        <taxon>Metazoa</taxon>
        <taxon>Ecdysozoa</taxon>
        <taxon>Arthropoda</taxon>
        <taxon>Hexapoda</taxon>
        <taxon>Insecta</taxon>
        <taxon>Pterygota</taxon>
        <taxon>Neoptera</taxon>
        <taxon>Endopterygota</taxon>
        <taxon>Diptera</taxon>
        <taxon>Brachycera</taxon>
        <taxon>Muscomorpha</taxon>
        <taxon>Ephydroidea</taxon>
        <taxon>Drosophilidae</taxon>
        <taxon>Drosophila</taxon>
        <taxon>Sophophora</taxon>
    </lineage>
</organism>
<feature type="chain" id="PRO_0000052326" description="Probable cytochrome P450 313a4">
    <location>
        <begin position="1"/>
        <end position="494"/>
    </location>
</feature>
<feature type="binding site" description="axial binding residue" evidence="1">
    <location>
        <position position="440"/>
    </location>
    <ligand>
        <name>heme</name>
        <dbReference type="ChEBI" id="CHEBI:30413"/>
    </ligand>
    <ligandPart>
        <name>Fe</name>
        <dbReference type="ChEBI" id="CHEBI:18248"/>
    </ligandPart>
</feature>